<keyword id="KW-0067">ATP-binding</keyword>
<keyword id="KW-0227">DNA damage</keyword>
<keyword id="KW-0234">DNA repair</keyword>
<keyword id="KW-0547">Nucleotide-binding</keyword>
<keyword id="KW-0539">Nucleus</keyword>
<keyword id="KW-1185">Reference proteome</keyword>
<keyword id="KW-0808">Transferase</keyword>
<keyword id="KW-0833">Ubl conjugation pathway</keyword>
<comment type="function">
    <text evidence="1">Accepts ubiquitin from the E1 complex and catalyzes its covalent attachment to other proteins. Catalyzes monoubiquitination. Involved in DNA repair.</text>
</comment>
<comment type="catalytic activity">
    <reaction evidence="2 3">
        <text>S-ubiquitinyl-[E1 ubiquitin-activating enzyme]-L-cysteine + [E2 ubiquitin-conjugating enzyme]-L-cysteine = [E1 ubiquitin-activating enzyme]-L-cysteine + S-ubiquitinyl-[E2 ubiquitin-conjugating enzyme]-L-cysteine.</text>
        <dbReference type="EC" id="2.3.2.23"/>
    </reaction>
</comment>
<comment type="pathway">
    <text evidence="2">Protein modification; protein ubiquitination.</text>
</comment>
<comment type="subcellular location">
    <subcellularLocation>
        <location evidence="1">Nucleus</location>
    </subcellularLocation>
    <text evidence="1">Accumulates to chromatin.</text>
</comment>
<comment type="similarity">
    <text evidence="2">Belongs to the ubiquitin-conjugating enzyme family.</text>
</comment>
<sequence>MQRVSRLKRELQLLNKEPPPGVICWQNESNMDDLRAQIIGGSGSPYEGGIFNLEIIVPERYPFEPPKIRFLTPIYHPNIDSAGRICLDILKLPPKGAWRPALNISTVLTSIQLLMSEPNPDDPLMADISSEFKYNRAVFFSNAKKWTEKHALPAPQGSDKESQEKSGSSEGTSHKRKSAEIAEESKKPCREP</sequence>
<feature type="chain" id="PRO_0000082511" description="Ubiquitin-conjugating enzyme E2 T">
    <location>
        <begin position="1"/>
        <end position="192"/>
    </location>
</feature>
<feature type="domain" description="UBC core" evidence="2">
    <location>
        <begin position="2"/>
        <end position="152"/>
    </location>
</feature>
<feature type="region of interest" description="Disordered" evidence="4">
    <location>
        <begin position="150"/>
        <end position="192"/>
    </location>
</feature>
<feature type="compositionally biased region" description="Basic and acidic residues" evidence="4">
    <location>
        <begin position="178"/>
        <end position="192"/>
    </location>
</feature>
<feature type="active site" description="Glycyl thioester intermediate" evidence="2 3">
    <location>
        <position position="86"/>
    </location>
</feature>
<protein>
    <recommendedName>
        <fullName>Ubiquitin-conjugating enzyme E2 T</fullName>
        <ecNumber>2.3.2.23</ecNumber>
    </recommendedName>
    <alternativeName>
        <fullName>E2 ubiquitin-conjugating enzyme T</fullName>
    </alternativeName>
    <alternativeName>
        <fullName>Ubiquitin carrier protein T</fullName>
    </alternativeName>
    <alternativeName>
        <fullName>Ubiquitin-protein ligase T</fullName>
    </alternativeName>
</protein>
<gene>
    <name type="primary">ube2t</name>
</gene>
<accession>Q7ZY08</accession>
<proteinExistence type="evidence at transcript level"/>
<dbReference type="EC" id="2.3.2.23"/>
<dbReference type="EMBL" id="BC044029">
    <property type="protein sequence ID" value="AAH44029.1"/>
    <property type="molecule type" value="mRNA"/>
</dbReference>
<dbReference type="RefSeq" id="NP_001080105.1">
    <property type="nucleotide sequence ID" value="NM_001086636.1"/>
</dbReference>
<dbReference type="RefSeq" id="XP_018103516.1">
    <property type="nucleotide sequence ID" value="XM_018248027.1"/>
</dbReference>
<dbReference type="RefSeq" id="XP_018103517.1">
    <property type="nucleotide sequence ID" value="XM_018248028.1"/>
</dbReference>
<dbReference type="SMR" id="Q7ZY08"/>
<dbReference type="DNASU" id="379797"/>
<dbReference type="GeneID" id="379797"/>
<dbReference type="KEGG" id="xla:379797"/>
<dbReference type="AGR" id="Xenbase:XB-GENE-6254937"/>
<dbReference type="CTD" id="379797"/>
<dbReference type="Xenbase" id="XB-GENE-6254937">
    <property type="gene designation" value="ube2t.S"/>
</dbReference>
<dbReference type="OMA" id="GVEKKFC"/>
<dbReference type="OrthoDB" id="9978460at2759"/>
<dbReference type="UniPathway" id="UPA00143"/>
<dbReference type="Proteomes" id="UP000186698">
    <property type="component" value="Chromosome 2S"/>
</dbReference>
<dbReference type="Bgee" id="379797">
    <property type="expression patterns" value="Expressed in oocyte and 20 other cell types or tissues"/>
</dbReference>
<dbReference type="GO" id="GO:0005634">
    <property type="term" value="C:nucleus"/>
    <property type="evidence" value="ECO:0007669"/>
    <property type="project" value="UniProtKB-SubCell"/>
</dbReference>
<dbReference type="GO" id="GO:0005524">
    <property type="term" value="F:ATP binding"/>
    <property type="evidence" value="ECO:0007669"/>
    <property type="project" value="UniProtKB-KW"/>
</dbReference>
<dbReference type="GO" id="GO:0003682">
    <property type="term" value="F:chromatin binding"/>
    <property type="evidence" value="ECO:0000250"/>
    <property type="project" value="UniProtKB"/>
</dbReference>
<dbReference type="GO" id="GO:0061631">
    <property type="term" value="F:ubiquitin conjugating enzyme activity"/>
    <property type="evidence" value="ECO:0007669"/>
    <property type="project" value="UniProtKB-EC"/>
</dbReference>
<dbReference type="GO" id="GO:0004842">
    <property type="term" value="F:ubiquitin-protein transferase activity"/>
    <property type="evidence" value="ECO:0000250"/>
    <property type="project" value="UniProtKB"/>
</dbReference>
<dbReference type="GO" id="GO:0006974">
    <property type="term" value="P:DNA damage response"/>
    <property type="evidence" value="ECO:0000250"/>
    <property type="project" value="UniProtKB"/>
</dbReference>
<dbReference type="GO" id="GO:0006281">
    <property type="term" value="P:DNA repair"/>
    <property type="evidence" value="ECO:0000250"/>
    <property type="project" value="UniProtKB"/>
</dbReference>
<dbReference type="GO" id="GO:0051865">
    <property type="term" value="P:protein autoubiquitination"/>
    <property type="evidence" value="ECO:0000250"/>
    <property type="project" value="UniProtKB"/>
</dbReference>
<dbReference type="GO" id="GO:0006513">
    <property type="term" value="P:protein monoubiquitination"/>
    <property type="evidence" value="ECO:0000250"/>
    <property type="project" value="UniProtKB"/>
</dbReference>
<dbReference type="CDD" id="cd23805">
    <property type="entry name" value="UBCc_UBE2T"/>
    <property type="match status" value="1"/>
</dbReference>
<dbReference type="FunFam" id="3.10.110.10:FF:000041">
    <property type="entry name" value="Ubiquitin-conjugating enzyme E2 T"/>
    <property type="match status" value="1"/>
</dbReference>
<dbReference type="Gene3D" id="3.10.110.10">
    <property type="entry name" value="Ubiquitin Conjugating Enzyme"/>
    <property type="match status" value="1"/>
</dbReference>
<dbReference type="InterPro" id="IPR050113">
    <property type="entry name" value="Ub_conjugating_enzyme"/>
</dbReference>
<dbReference type="InterPro" id="IPR000608">
    <property type="entry name" value="UBQ-conjugat_E2_core"/>
</dbReference>
<dbReference type="InterPro" id="IPR023313">
    <property type="entry name" value="UBQ-conjugating_AS"/>
</dbReference>
<dbReference type="InterPro" id="IPR016135">
    <property type="entry name" value="UBQ-conjugating_enzyme/RWD"/>
</dbReference>
<dbReference type="PANTHER" id="PTHR24067">
    <property type="entry name" value="UBIQUITIN-CONJUGATING ENZYME E2"/>
    <property type="match status" value="1"/>
</dbReference>
<dbReference type="Pfam" id="PF00179">
    <property type="entry name" value="UQ_con"/>
    <property type="match status" value="1"/>
</dbReference>
<dbReference type="SMART" id="SM00212">
    <property type="entry name" value="UBCc"/>
    <property type="match status" value="1"/>
</dbReference>
<dbReference type="SUPFAM" id="SSF54495">
    <property type="entry name" value="UBC-like"/>
    <property type="match status" value="1"/>
</dbReference>
<dbReference type="PROSITE" id="PS00183">
    <property type="entry name" value="UBC_1"/>
    <property type="match status" value="1"/>
</dbReference>
<dbReference type="PROSITE" id="PS50127">
    <property type="entry name" value="UBC_2"/>
    <property type="match status" value="1"/>
</dbReference>
<name>UBE2T_XENLA</name>
<reference key="1">
    <citation type="submission" date="2003-01" db="EMBL/GenBank/DDBJ databases">
        <authorList>
            <consortium name="NIH - Xenopus Gene Collection (XGC) project"/>
        </authorList>
    </citation>
    <scope>NUCLEOTIDE SEQUENCE [LARGE SCALE MRNA]</scope>
    <source>
        <tissue>Embryo</tissue>
    </source>
</reference>
<organism>
    <name type="scientific">Xenopus laevis</name>
    <name type="common">African clawed frog</name>
    <dbReference type="NCBI Taxonomy" id="8355"/>
    <lineage>
        <taxon>Eukaryota</taxon>
        <taxon>Metazoa</taxon>
        <taxon>Chordata</taxon>
        <taxon>Craniata</taxon>
        <taxon>Vertebrata</taxon>
        <taxon>Euteleostomi</taxon>
        <taxon>Amphibia</taxon>
        <taxon>Batrachia</taxon>
        <taxon>Anura</taxon>
        <taxon>Pipoidea</taxon>
        <taxon>Pipidae</taxon>
        <taxon>Xenopodinae</taxon>
        <taxon>Xenopus</taxon>
        <taxon>Xenopus</taxon>
    </lineage>
</organism>
<evidence type="ECO:0000250" key="1">
    <source>
        <dbReference type="UniProtKB" id="Q9NPD8"/>
    </source>
</evidence>
<evidence type="ECO:0000255" key="2">
    <source>
        <dbReference type="PROSITE-ProRule" id="PRU00388"/>
    </source>
</evidence>
<evidence type="ECO:0000255" key="3">
    <source>
        <dbReference type="PROSITE-ProRule" id="PRU10133"/>
    </source>
</evidence>
<evidence type="ECO:0000256" key="4">
    <source>
        <dbReference type="SAM" id="MobiDB-lite"/>
    </source>
</evidence>